<dbReference type="EC" id="3.1.1.7"/>
<dbReference type="EMBL" id="AJ488492">
    <property type="protein sequence ID" value="CAD32684.2"/>
    <property type="molecule type" value="Genomic_DNA"/>
</dbReference>
<dbReference type="EMBL" id="AJ515149">
    <property type="protein sequence ID" value="CAD56156.1"/>
    <property type="molecule type" value="Genomic_DNA"/>
</dbReference>
<dbReference type="EMBL" id="AJ515148">
    <property type="protein sequence ID" value="CAD56156.1"/>
    <property type="status" value="JOINED"/>
    <property type="molecule type" value="Genomic_DNA"/>
</dbReference>
<dbReference type="EMBL" id="AJ515150">
    <property type="protein sequence ID" value="CAD56157.2"/>
    <property type="molecule type" value="Genomic_DNA"/>
</dbReference>
<dbReference type="EMBL" id="AJ488492">
    <property type="protein sequence ID" value="CAD56157.2"/>
    <property type="status" value="JOINED"/>
    <property type="molecule type" value="Genomic_DNA"/>
</dbReference>
<dbReference type="EMBL" id="AAAB01008987">
    <property type="protein sequence ID" value="EAA01151.3"/>
    <property type="molecule type" value="Genomic_DNA"/>
</dbReference>
<dbReference type="EMBL" id="BN000066">
    <property type="protein sequence ID" value="CAD29865.2"/>
    <property type="molecule type" value="Genomic_DNA"/>
</dbReference>
<dbReference type="RefSeq" id="XP_321792.2">
    <property type="nucleotide sequence ID" value="XM_321792.4"/>
</dbReference>
<dbReference type="PDB" id="5X61">
    <property type="method" value="X-ray"/>
    <property type="resolution" value="3.40 A"/>
    <property type="chains" value="A/B=162-714"/>
</dbReference>
<dbReference type="PDB" id="5YDH">
    <property type="method" value="X-ray"/>
    <property type="resolution" value="3.21 A"/>
    <property type="chains" value="A/B=162-737"/>
</dbReference>
<dbReference type="PDB" id="5YDI">
    <property type="method" value="X-ray"/>
    <property type="resolution" value="3.45 A"/>
    <property type="chains" value="A/B/C=162-714"/>
</dbReference>
<dbReference type="PDB" id="5YDJ">
    <property type="method" value="X-ray"/>
    <property type="resolution" value="3.04 A"/>
    <property type="chains" value="A/B=1-737"/>
</dbReference>
<dbReference type="PDB" id="6ARX">
    <property type="method" value="X-ray"/>
    <property type="resolution" value="2.30 A"/>
    <property type="chains" value="A/B=162-702"/>
</dbReference>
<dbReference type="PDB" id="6ARY">
    <property type="method" value="X-ray"/>
    <property type="resolution" value="2.26 A"/>
    <property type="chains" value="A/B=162-702"/>
</dbReference>
<dbReference type="PDBsum" id="5X61"/>
<dbReference type="PDBsum" id="5YDH"/>
<dbReference type="PDBsum" id="5YDI"/>
<dbReference type="PDBsum" id="5YDJ"/>
<dbReference type="PDBsum" id="6ARX"/>
<dbReference type="PDBsum" id="6ARY"/>
<dbReference type="SMR" id="Q869C3"/>
<dbReference type="STRING" id="7165.Q869C3"/>
<dbReference type="BindingDB" id="Q869C3"/>
<dbReference type="ChEMBL" id="CHEMBL2046266"/>
<dbReference type="DrugCentral" id="Q869C3"/>
<dbReference type="ESTHER" id="anoga-ACHE1">
    <property type="family name" value="ACHE"/>
</dbReference>
<dbReference type="GlyCosmos" id="Q869C3">
    <property type="glycosylation" value="2 sites, No reported glycans"/>
</dbReference>
<dbReference type="PaxDb" id="7165-AGAP001356-PA"/>
<dbReference type="EnsemblMetazoa" id="AGAP001356-RA">
    <property type="protein sequence ID" value="AGAP001356-PA"/>
    <property type="gene ID" value="AGAP001356"/>
</dbReference>
<dbReference type="VEuPathDB" id="VectorBase:AGAMI1_012788"/>
<dbReference type="VEuPathDB" id="VectorBase:AGAP001356"/>
<dbReference type="eggNOG" id="KOG4389">
    <property type="taxonomic scope" value="Eukaryota"/>
</dbReference>
<dbReference type="InParanoid" id="Q869C3"/>
<dbReference type="OMA" id="CDHLVAP"/>
<dbReference type="OrthoDB" id="9000293at2759"/>
<dbReference type="PhylomeDB" id="Q869C3"/>
<dbReference type="PRO" id="PR:Q869C3"/>
<dbReference type="Proteomes" id="UP000007062">
    <property type="component" value="Chromosome 2R"/>
</dbReference>
<dbReference type="GO" id="GO:0005615">
    <property type="term" value="C:extracellular space"/>
    <property type="evidence" value="ECO:0000318"/>
    <property type="project" value="GO_Central"/>
</dbReference>
<dbReference type="GO" id="GO:0005886">
    <property type="term" value="C:plasma membrane"/>
    <property type="evidence" value="ECO:0000318"/>
    <property type="project" value="GO_Central"/>
</dbReference>
<dbReference type="GO" id="GO:0045202">
    <property type="term" value="C:synapse"/>
    <property type="evidence" value="ECO:0007669"/>
    <property type="project" value="UniProtKB-SubCell"/>
</dbReference>
<dbReference type="GO" id="GO:0003990">
    <property type="term" value="F:acetylcholinesterase activity"/>
    <property type="evidence" value="ECO:0000318"/>
    <property type="project" value="GO_Central"/>
</dbReference>
<dbReference type="GO" id="GO:0006581">
    <property type="term" value="P:acetylcholine catabolic process"/>
    <property type="evidence" value="ECO:0000318"/>
    <property type="project" value="GO_Central"/>
</dbReference>
<dbReference type="GO" id="GO:0019695">
    <property type="term" value="P:choline metabolic process"/>
    <property type="evidence" value="ECO:0000318"/>
    <property type="project" value="GO_Central"/>
</dbReference>
<dbReference type="CDD" id="cd00312">
    <property type="entry name" value="Esterase_lipase"/>
    <property type="match status" value="1"/>
</dbReference>
<dbReference type="FunFam" id="3.40.50.1820:FF:000029">
    <property type="entry name" value="Acetylcholinesterase"/>
    <property type="match status" value="1"/>
</dbReference>
<dbReference type="Gene3D" id="3.40.50.1820">
    <property type="entry name" value="alpha/beta hydrolase"/>
    <property type="match status" value="1"/>
</dbReference>
<dbReference type="InterPro" id="IPR029058">
    <property type="entry name" value="AB_hydrolase_fold"/>
</dbReference>
<dbReference type="InterPro" id="IPR050654">
    <property type="entry name" value="AChE-related_enzymes"/>
</dbReference>
<dbReference type="InterPro" id="IPR002018">
    <property type="entry name" value="CarbesteraseB"/>
</dbReference>
<dbReference type="InterPro" id="IPR019826">
    <property type="entry name" value="Carboxylesterase_B_AS"/>
</dbReference>
<dbReference type="InterPro" id="IPR019819">
    <property type="entry name" value="Carboxylesterase_B_CS"/>
</dbReference>
<dbReference type="InterPro" id="IPR000997">
    <property type="entry name" value="Cholinesterase"/>
</dbReference>
<dbReference type="PANTHER" id="PTHR43918">
    <property type="entry name" value="ACETYLCHOLINESTERASE"/>
    <property type="match status" value="1"/>
</dbReference>
<dbReference type="PANTHER" id="PTHR43918:SF12">
    <property type="entry name" value="ACETYLCHOLINESTERASE 1"/>
    <property type="match status" value="1"/>
</dbReference>
<dbReference type="Pfam" id="PF00135">
    <property type="entry name" value="COesterase"/>
    <property type="match status" value="1"/>
</dbReference>
<dbReference type="PRINTS" id="PR00878">
    <property type="entry name" value="CHOLNESTRASE"/>
</dbReference>
<dbReference type="SUPFAM" id="SSF53474">
    <property type="entry name" value="alpha/beta-Hydrolases"/>
    <property type="match status" value="1"/>
</dbReference>
<dbReference type="PROSITE" id="PS00122">
    <property type="entry name" value="CARBOXYLESTERASE_B_1"/>
    <property type="match status" value="1"/>
</dbReference>
<dbReference type="PROSITE" id="PS00941">
    <property type="entry name" value="CARBOXYLESTERASE_B_2"/>
    <property type="match status" value="1"/>
</dbReference>
<keyword id="KW-0002">3D-structure</keyword>
<keyword id="KW-1015">Disulfide bond</keyword>
<keyword id="KW-0325">Glycoprotein</keyword>
<keyword id="KW-0378">Hydrolase</keyword>
<keyword id="KW-0531">Neurotransmitter degradation</keyword>
<keyword id="KW-1185">Reference proteome</keyword>
<keyword id="KW-0719">Serine esterase</keyword>
<keyword id="KW-0732">Signal</keyword>
<keyword id="KW-0770">Synapse</keyword>
<name>ACES_ANOGA</name>
<gene>
    <name type="primary">Ace</name>
    <name type="synonym">ACE1</name>
    <name type="synonym">ACHE1</name>
    <name type="ORF">AGAP001356</name>
</gene>
<comment type="function">
    <text evidence="7">Rapidly hydrolyzes choline released into the synapse.</text>
</comment>
<comment type="catalytic activity">
    <reaction evidence="2">
        <text>acetylcholine + H2O = choline + acetate + H(+)</text>
        <dbReference type="Rhea" id="RHEA:17561"/>
        <dbReference type="ChEBI" id="CHEBI:15354"/>
        <dbReference type="ChEBI" id="CHEBI:15355"/>
        <dbReference type="ChEBI" id="CHEBI:15377"/>
        <dbReference type="ChEBI" id="CHEBI:15378"/>
        <dbReference type="ChEBI" id="CHEBI:30089"/>
        <dbReference type="EC" id="3.1.1.7"/>
    </reaction>
</comment>
<comment type="subcellular location">
    <subcellularLocation>
        <location>Synapse</location>
    </subcellularLocation>
</comment>
<comment type="polymorphism">
    <text>Strains Kisumu and Kisumu2 are susceptible to insecticides while strain YAO is resistant. Insensitivity to insecticides results from a loss of sensitivity of acetylcholinesterase to organophosphates and carbamates and is due to a variant at position 280.</text>
</comment>
<comment type="similarity">
    <text evidence="7">Belongs to the type-B carboxylesterase/lipase family.</text>
</comment>
<proteinExistence type="evidence at protein level"/>
<evidence type="ECO:0000250" key="1"/>
<evidence type="ECO:0000250" key="2">
    <source>
        <dbReference type="UniProtKB" id="P22303"/>
    </source>
</evidence>
<evidence type="ECO:0000255" key="3"/>
<evidence type="ECO:0000255" key="4">
    <source>
        <dbReference type="PROSITE-ProRule" id="PRU10039"/>
    </source>
</evidence>
<evidence type="ECO:0000256" key="5">
    <source>
        <dbReference type="SAM" id="MobiDB-lite"/>
    </source>
</evidence>
<evidence type="ECO:0000269" key="6">
    <source>
    </source>
</evidence>
<evidence type="ECO:0000305" key="7"/>
<evidence type="ECO:0000312" key="8">
    <source>
        <dbReference type="EMBL" id="CAD56156.1"/>
    </source>
</evidence>
<evidence type="ECO:0007829" key="9">
    <source>
        <dbReference type="PDB" id="5X61"/>
    </source>
</evidence>
<evidence type="ECO:0007829" key="10">
    <source>
        <dbReference type="PDB" id="5YDH"/>
    </source>
</evidence>
<evidence type="ECO:0007829" key="11">
    <source>
        <dbReference type="PDB" id="5YDJ"/>
    </source>
</evidence>
<evidence type="ECO:0007829" key="12">
    <source>
        <dbReference type="PDB" id="6ARY"/>
    </source>
</evidence>
<protein>
    <recommendedName>
        <fullName>Acetylcholinesterase</fullName>
        <shortName>AChE</shortName>
        <ecNumber>3.1.1.7</ecNumber>
    </recommendedName>
</protein>
<feature type="signal peptide" evidence="3">
    <location>
        <begin position="1"/>
        <end position="38"/>
    </location>
</feature>
<feature type="chain" id="PRO_0000008599" description="Acetylcholinesterase">
    <location>
        <begin position="39"/>
        <end position="737"/>
    </location>
</feature>
<feature type="region of interest" description="Disordered" evidence="5">
    <location>
        <begin position="141"/>
        <end position="168"/>
    </location>
</feature>
<feature type="active site" description="Acyl-ester intermediate" evidence="4">
    <location>
        <position position="360"/>
    </location>
</feature>
<feature type="active site" description="Charge relay system" evidence="1">
    <location>
        <position position="486"/>
    </location>
</feature>
<feature type="active site" description="Charge relay system" evidence="1">
    <location>
        <position position="600"/>
    </location>
</feature>
<feature type="glycosylation site" description="N-linked (GlcNAc...) asparagine" evidence="3">
    <location>
        <position position="220"/>
    </location>
</feature>
<feature type="glycosylation site" description="N-linked (GlcNAc...) asparagine" evidence="3">
    <location>
        <position position="670"/>
    </location>
</feature>
<feature type="disulfide bond" evidence="1">
    <location>
        <begin position="228"/>
        <end position="255"/>
    </location>
</feature>
<feature type="disulfide bond" evidence="1">
    <location>
        <begin position="414"/>
        <end position="427"/>
    </location>
</feature>
<feature type="disulfide bond" evidence="1">
    <location>
        <begin position="562"/>
        <end position="683"/>
    </location>
</feature>
<feature type="sequence variant" description="In strain: Kisumu2 and YAO.">
    <original>V</original>
    <variation>A</variation>
    <location>
        <position position="127"/>
    </location>
</feature>
<feature type="sequence variant" description="In strain: YAO; confers resistance to insecticides." evidence="6">
    <original>G</original>
    <variation>S</variation>
    <location>
        <position position="280"/>
    </location>
</feature>
<feature type="sequence conflict" description="In Ref. 1; CAD56157." evidence="7" ref="1">
    <original>F</original>
    <variation>S</variation>
    <location>
        <position position="35"/>
    </location>
</feature>
<feature type="sequence conflict" description="In Ref. 1; CAD56157." evidence="7" ref="1">
    <original>A</original>
    <variation>S</variation>
    <location>
        <position position="65"/>
    </location>
</feature>
<feature type="strand" evidence="12">
    <location>
        <begin position="167"/>
        <end position="170"/>
    </location>
</feature>
<feature type="strand" evidence="12">
    <location>
        <begin position="173"/>
        <end position="176"/>
    </location>
</feature>
<feature type="strand" evidence="12">
    <location>
        <begin position="178"/>
        <end position="181"/>
    </location>
</feature>
<feature type="strand" evidence="12">
    <location>
        <begin position="187"/>
        <end position="195"/>
    </location>
</feature>
<feature type="helix" evidence="12">
    <location>
        <begin position="202"/>
        <end position="204"/>
    </location>
</feature>
<feature type="strand" evidence="12">
    <location>
        <begin position="217"/>
        <end position="220"/>
    </location>
</feature>
<feature type="strand" evidence="10">
    <location>
        <begin position="227"/>
        <end position="229"/>
    </location>
</feature>
<feature type="turn" evidence="12">
    <location>
        <begin position="235"/>
        <end position="238"/>
    </location>
</feature>
<feature type="helix" evidence="12">
    <location>
        <begin position="240"/>
        <end position="243"/>
    </location>
</feature>
<feature type="strand" evidence="10">
    <location>
        <begin position="251"/>
        <end position="253"/>
    </location>
</feature>
<feature type="strand" evidence="12">
    <location>
        <begin position="257"/>
        <end position="265"/>
    </location>
</feature>
<feature type="strand" evidence="12">
    <location>
        <begin position="268"/>
        <end position="276"/>
    </location>
</feature>
<feature type="turn" evidence="12">
    <location>
        <begin position="280"/>
        <end position="282"/>
    </location>
</feature>
<feature type="helix" evidence="12">
    <location>
        <begin position="289"/>
        <end position="291"/>
    </location>
</feature>
<feature type="helix" evidence="12">
    <location>
        <begin position="294"/>
        <end position="300"/>
    </location>
</feature>
<feature type="strand" evidence="12">
    <location>
        <begin position="303"/>
        <end position="307"/>
    </location>
</feature>
<feature type="helix" evidence="12">
    <location>
        <begin position="312"/>
        <end position="316"/>
    </location>
</feature>
<feature type="strand" evidence="11">
    <location>
        <begin position="318"/>
        <end position="321"/>
    </location>
</feature>
<feature type="strand" evidence="12">
    <location>
        <begin position="324"/>
        <end position="326"/>
    </location>
</feature>
<feature type="helix" evidence="12">
    <location>
        <begin position="328"/>
        <end position="343"/>
    </location>
</feature>
<feature type="helix" evidence="12">
    <location>
        <begin position="344"/>
        <end position="347"/>
    </location>
</feature>
<feature type="strand" evidence="12">
    <location>
        <begin position="349"/>
        <end position="359"/>
    </location>
</feature>
<feature type="helix" evidence="12">
    <location>
        <begin position="361"/>
        <end position="371"/>
    </location>
</feature>
<feature type="turn" evidence="12">
    <location>
        <begin position="373"/>
        <end position="377"/>
    </location>
</feature>
<feature type="strand" evidence="12">
    <location>
        <begin position="380"/>
        <end position="386"/>
    </location>
</feature>
<feature type="turn" evidence="11">
    <location>
        <begin position="392"/>
        <end position="394"/>
    </location>
</feature>
<feature type="helix" evidence="12">
    <location>
        <begin position="398"/>
        <end position="411"/>
    </location>
</feature>
<feature type="helix" evidence="12">
    <location>
        <begin position="421"/>
        <end position="428"/>
    </location>
</feature>
<feature type="helix" evidence="12">
    <location>
        <begin position="433"/>
        <end position="438"/>
    </location>
</feature>
<feature type="strand" evidence="12">
    <location>
        <begin position="457"/>
        <end position="459"/>
    </location>
</feature>
<feature type="helix" evidence="12">
    <location>
        <begin position="464"/>
        <end position="470"/>
    </location>
</feature>
<feature type="strand" evidence="12">
    <location>
        <begin position="478"/>
        <end position="483"/>
    </location>
</feature>
<feature type="strand" evidence="10">
    <location>
        <begin position="485"/>
        <end position="487"/>
    </location>
</feature>
<feature type="helix" evidence="12">
    <location>
        <begin position="488"/>
        <end position="494"/>
    </location>
</feature>
<feature type="turn" evidence="12">
    <location>
        <begin position="496"/>
        <end position="498"/>
    </location>
</feature>
<feature type="helix" evidence="12">
    <location>
        <begin position="509"/>
        <end position="519"/>
    </location>
</feature>
<feature type="helix" evidence="12">
    <location>
        <begin position="525"/>
        <end position="534"/>
    </location>
</feature>
<feature type="helix" evidence="12">
    <location>
        <begin position="544"/>
        <end position="559"/>
    </location>
</feature>
<feature type="helix" evidence="12">
    <location>
        <begin position="561"/>
        <end position="573"/>
    </location>
</feature>
<feature type="strand" evidence="12">
    <location>
        <begin position="578"/>
        <end position="583"/>
    </location>
</feature>
<feature type="helix" evidence="12">
    <location>
        <begin position="594"/>
        <end position="596"/>
    </location>
</feature>
<feature type="turn" evidence="12">
    <location>
        <begin position="600"/>
        <end position="603"/>
    </location>
</feature>
<feature type="helix" evidence="12">
    <location>
        <begin position="604"/>
        <end position="607"/>
    </location>
</feature>
<feature type="helix" evidence="12">
    <location>
        <begin position="610"/>
        <end position="612"/>
    </location>
</feature>
<feature type="helix" evidence="9">
    <location>
        <begin position="614"/>
        <end position="616"/>
    </location>
</feature>
<feature type="helix" evidence="12">
    <location>
        <begin position="620"/>
        <end position="639"/>
    </location>
</feature>
<feature type="strand" evidence="12">
    <location>
        <begin position="649"/>
        <end position="651"/>
    </location>
</feature>
<feature type="turn" evidence="12">
    <location>
        <begin position="659"/>
        <end position="661"/>
    </location>
</feature>
<feature type="strand" evidence="12">
    <location>
        <begin position="663"/>
        <end position="668"/>
    </location>
</feature>
<feature type="strand" evidence="12">
    <location>
        <begin position="674"/>
        <end position="679"/>
    </location>
</feature>
<feature type="helix" evidence="12">
    <location>
        <begin position="680"/>
        <end position="687"/>
    </location>
</feature>
<feature type="helix" evidence="12">
    <location>
        <begin position="689"/>
        <end position="696"/>
    </location>
</feature>
<accession>Q869C3</accession>
<accession>Q7PUR2</accession>
<accession>Q7RTM0</accession>
<accession>Q86GC7</accession>
<accession>Q8ISM4</accession>
<accession>Q8ISM7</accession>
<organism evidence="8">
    <name type="scientific">Anopheles gambiae</name>
    <name type="common">African malaria mosquito</name>
    <dbReference type="NCBI Taxonomy" id="7165"/>
    <lineage>
        <taxon>Eukaryota</taxon>
        <taxon>Metazoa</taxon>
        <taxon>Ecdysozoa</taxon>
        <taxon>Arthropoda</taxon>
        <taxon>Hexapoda</taxon>
        <taxon>Insecta</taxon>
        <taxon>Pterygota</taxon>
        <taxon>Neoptera</taxon>
        <taxon>Endopterygota</taxon>
        <taxon>Diptera</taxon>
        <taxon>Nematocera</taxon>
        <taxon>Culicoidea</taxon>
        <taxon>Culicidae</taxon>
        <taxon>Anophelinae</taxon>
        <taxon>Anopheles</taxon>
    </lineage>
</organism>
<reference evidence="7" key="1">
    <citation type="journal article" date="2003" name="Nature">
        <title>Insecticide resistance in mosquito vectors.</title>
        <authorList>
            <person name="Weill M."/>
            <person name="Lutfalla G."/>
            <person name="Mogensen K."/>
            <person name="Chandre F."/>
            <person name="Berthomieu A."/>
            <person name="Berticat C."/>
            <person name="Pasteur N."/>
            <person name="Philips A."/>
            <person name="Fort P."/>
            <person name="Raymond M."/>
        </authorList>
    </citation>
    <scope>NUCLEOTIDE SEQUENCE [GENOMIC DNA]</scope>
    <source>
        <strain>Kisumu</strain>
        <strain>Kisumu2</strain>
        <strain evidence="8">YAO</strain>
    </source>
</reference>
<reference key="2">
    <citation type="journal article" date="2002" name="Science">
        <title>The genome sequence of the malaria mosquito Anopheles gambiae.</title>
        <authorList>
            <person name="Holt R.A."/>
            <person name="Subramanian G.M."/>
            <person name="Halpern A."/>
            <person name="Sutton G.G."/>
            <person name="Charlab R."/>
            <person name="Nusskern D.R."/>
            <person name="Wincker P."/>
            <person name="Clark A.G."/>
            <person name="Ribeiro J.M.C."/>
            <person name="Wides R."/>
            <person name="Salzberg S.L."/>
            <person name="Loftus B.J."/>
            <person name="Yandell M.D."/>
            <person name="Majoros W.H."/>
            <person name="Rusch D.B."/>
            <person name="Lai Z."/>
            <person name="Kraft C.L."/>
            <person name="Abril J.F."/>
            <person name="Anthouard V."/>
            <person name="Arensburger P."/>
            <person name="Atkinson P.W."/>
            <person name="Baden H."/>
            <person name="de Berardinis V."/>
            <person name="Baldwin D."/>
            <person name="Benes V."/>
            <person name="Biedler J."/>
            <person name="Blass C."/>
            <person name="Bolanos R."/>
            <person name="Boscus D."/>
            <person name="Barnstead M."/>
            <person name="Cai S."/>
            <person name="Center A."/>
            <person name="Chaturverdi K."/>
            <person name="Christophides G.K."/>
            <person name="Chrystal M.A.M."/>
            <person name="Clamp M."/>
            <person name="Cravchik A."/>
            <person name="Curwen V."/>
            <person name="Dana A."/>
            <person name="Delcher A."/>
            <person name="Dew I."/>
            <person name="Evans C.A."/>
            <person name="Flanigan M."/>
            <person name="Grundschober-Freimoser A."/>
            <person name="Friedli L."/>
            <person name="Gu Z."/>
            <person name="Guan P."/>
            <person name="Guigo R."/>
            <person name="Hillenmeyer M.E."/>
            <person name="Hladun S.L."/>
            <person name="Hogan J.R."/>
            <person name="Hong Y.S."/>
            <person name="Hoover J."/>
            <person name="Jaillon O."/>
            <person name="Ke Z."/>
            <person name="Kodira C.D."/>
            <person name="Kokoza E."/>
            <person name="Koutsos A."/>
            <person name="Letunic I."/>
            <person name="Levitsky A.A."/>
            <person name="Liang Y."/>
            <person name="Lin J.-J."/>
            <person name="Lobo N.F."/>
            <person name="Lopez J.R."/>
            <person name="Malek J.A."/>
            <person name="McIntosh T.C."/>
            <person name="Meister S."/>
            <person name="Miller J.R."/>
            <person name="Mobarry C."/>
            <person name="Mongin E."/>
            <person name="Murphy S.D."/>
            <person name="O'Brochta D.A."/>
            <person name="Pfannkoch C."/>
            <person name="Qi R."/>
            <person name="Regier M.A."/>
            <person name="Remington K."/>
            <person name="Shao H."/>
            <person name="Sharakhova M.V."/>
            <person name="Sitter C.D."/>
            <person name="Shetty J."/>
            <person name="Smith T.J."/>
            <person name="Strong R."/>
            <person name="Sun J."/>
            <person name="Thomasova D."/>
            <person name="Ton L.Q."/>
            <person name="Topalis P."/>
            <person name="Tu Z.J."/>
            <person name="Unger M.F."/>
            <person name="Walenz B."/>
            <person name="Wang A.H."/>
            <person name="Wang J."/>
            <person name="Wang M."/>
            <person name="Wang X."/>
            <person name="Woodford K.J."/>
            <person name="Wortman J.R."/>
            <person name="Wu M."/>
            <person name="Yao A."/>
            <person name="Zdobnov E.M."/>
            <person name="Zhang H."/>
            <person name="Zhao Q."/>
            <person name="Zhao S."/>
            <person name="Zhu S.C."/>
            <person name="Zhimulev I."/>
            <person name="Coluzzi M."/>
            <person name="della Torre A."/>
            <person name="Roth C.W."/>
            <person name="Louis C."/>
            <person name="Kalush F."/>
            <person name="Mural R.J."/>
            <person name="Myers E.W."/>
            <person name="Adams M.D."/>
            <person name="Smith H.O."/>
            <person name="Broder S."/>
            <person name="Gardner M.J."/>
            <person name="Fraser C.M."/>
            <person name="Birney E."/>
            <person name="Bork P."/>
            <person name="Brey P.T."/>
            <person name="Venter J.C."/>
            <person name="Weissenbach J."/>
            <person name="Kafatos F.C."/>
            <person name="Collins F.H."/>
            <person name="Hoffman S.L."/>
        </authorList>
    </citation>
    <scope>NUCLEOTIDE SEQUENCE [LARGE SCALE GENOMIC DNA]</scope>
    <source>
        <strain>PEST</strain>
    </source>
</reference>
<reference key="3">
    <citation type="journal article" date="2002" name="Proc. R. Soc. B">
        <title>A novel acetylcholinesterase gene in mosquitoes codes for the insecticide target and is non-homologous to the ace gene in Drosophila.</title>
        <authorList>
            <person name="Weill M."/>
            <person name="Fort P."/>
            <person name="Berthomi eu A."/>
            <person name="Dubois M.P."/>
            <person name="Pasteur N."/>
            <person name="Raymond M."/>
        </authorList>
    </citation>
    <scope>PARTIAL GENE STRUCTURE</scope>
</reference>
<sequence length="737" mass="80902">MEIRGLLMGRLRLGRRMVPLGLLGVTALLLILPPFALVQGRHHELNNGAAIGSHQLSAAAGVGLASQSAQSGSLASGVMSSVPAAGASSSSSSSLLSSSAEDDVARITLSKDADAFFTPYIGHGESVRIIDAELGTLEHVHSGATPRRRGLTRRESNSDANDNDPLVVNTDKGRIRGITVDAPSGKKVDVWLGIPYAQPPVGPLRFRHPRPAEKWTGVLNTTTPPNSCVQIVDTVFGDFPGATMWNPNTPLSEDCLYINVVAPRPRPKNAAVMLWIFGGGFYSGTATLDVYDHRALASEENVIVVSLQYRVASLGFLFLGTPEAPGNAGLFDQNLALRWVRDNIHRFGGDPSRVTLFGESAGAVSVSLHLLSALSRDLFQRAILQSGSPTAPWALVSREEATLRALRLAEAVGCPHEPSKLSDAVECLRGKDPHVLVNNEWGTLGICEFPFVPVVDGAFLDETPQRSLASGRFKKTEILTGSNTEEGYYFIIYYLTELLRKEEGVTVTREEFLQAVRELNPYVNGAARQAIVFEYTDWTEPDNPNSNRDALDKMVGDYHFTCNVNEFAQRYAEEGNNVYMYLYTHRSKGNPWPRWTGVMHGDEINYVFGEPLNPTLGYTEDEKDFSRKIMRYWSNFAKTGNPNPNTASSEFPEWPKHTAHGRHYLELGLNTSFVGRGPRLRQCAFWKKYLPQLVAATSNLPGPAPPSEPCESSAFFYRPDLIVLLVSLLTATVRFIQ</sequence>